<protein>
    <recommendedName>
        <fullName evidence="1">Aspartate carbamoyltransferase regulatory chain</fullName>
    </recommendedName>
</protein>
<proteinExistence type="inferred from homology"/>
<keyword id="KW-0479">Metal-binding</keyword>
<keyword id="KW-0665">Pyrimidine biosynthesis</keyword>
<keyword id="KW-1185">Reference proteome</keyword>
<keyword id="KW-0862">Zinc</keyword>
<accession>A8MCA3</accession>
<feature type="chain" id="PRO_0000329096" description="Aspartate carbamoyltransferase regulatory chain">
    <location>
        <begin position="1"/>
        <end position="163"/>
    </location>
</feature>
<feature type="binding site" evidence="1">
    <location>
        <position position="113"/>
    </location>
    <ligand>
        <name>Zn(2+)</name>
        <dbReference type="ChEBI" id="CHEBI:29105"/>
    </ligand>
</feature>
<feature type="binding site" evidence="1">
    <location>
        <position position="118"/>
    </location>
    <ligand>
        <name>Zn(2+)</name>
        <dbReference type="ChEBI" id="CHEBI:29105"/>
    </ligand>
</feature>
<feature type="binding site" evidence="1">
    <location>
        <position position="143"/>
    </location>
    <ligand>
        <name>Zn(2+)</name>
        <dbReference type="ChEBI" id="CHEBI:29105"/>
    </ligand>
</feature>
<feature type="binding site" evidence="1">
    <location>
        <position position="146"/>
    </location>
    <ligand>
        <name>Zn(2+)</name>
        <dbReference type="ChEBI" id="CHEBI:29105"/>
    </ligand>
</feature>
<evidence type="ECO:0000255" key="1">
    <source>
        <dbReference type="HAMAP-Rule" id="MF_00002"/>
    </source>
</evidence>
<reference key="1">
    <citation type="submission" date="2007-10" db="EMBL/GenBank/DDBJ databases">
        <title>Complete sequence of Caldivirga maquilingensis IC-167.</title>
        <authorList>
            <consortium name="US DOE Joint Genome Institute"/>
            <person name="Copeland A."/>
            <person name="Lucas S."/>
            <person name="Lapidus A."/>
            <person name="Barry K."/>
            <person name="Glavina del Rio T."/>
            <person name="Dalin E."/>
            <person name="Tice H."/>
            <person name="Pitluck S."/>
            <person name="Saunders E."/>
            <person name="Brettin T."/>
            <person name="Bruce D."/>
            <person name="Detter J.C."/>
            <person name="Han C."/>
            <person name="Schmutz J."/>
            <person name="Larimer F."/>
            <person name="Land M."/>
            <person name="Hauser L."/>
            <person name="Kyrpides N."/>
            <person name="Ivanova N."/>
            <person name="Biddle J.F."/>
            <person name="Zhang Z."/>
            <person name="Fitz-Gibbon S.T."/>
            <person name="Lowe T.M."/>
            <person name="Saltikov C."/>
            <person name="House C.H."/>
            <person name="Richardson P."/>
        </authorList>
    </citation>
    <scope>NUCLEOTIDE SEQUENCE [LARGE SCALE GENOMIC DNA]</scope>
    <source>
        <strain>ATCC 700844 / DSM 13496 / JCM 10307 / IC-167</strain>
    </source>
</reference>
<organism>
    <name type="scientific">Caldivirga maquilingensis (strain ATCC 700844 / DSM 13496 / JCM 10307 / IC-167)</name>
    <dbReference type="NCBI Taxonomy" id="397948"/>
    <lineage>
        <taxon>Archaea</taxon>
        <taxon>Thermoproteota</taxon>
        <taxon>Thermoprotei</taxon>
        <taxon>Thermoproteales</taxon>
        <taxon>Thermoproteaceae</taxon>
        <taxon>Caldivirga</taxon>
    </lineage>
</organism>
<comment type="function">
    <text evidence="1">Involved in allosteric regulation of aspartate carbamoyltransferase.</text>
</comment>
<comment type="cofactor">
    <cofactor evidence="1">
        <name>Zn(2+)</name>
        <dbReference type="ChEBI" id="CHEBI:29105"/>
    </cofactor>
    <text evidence="1">Binds 1 zinc ion per subunit.</text>
</comment>
<comment type="subunit">
    <text evidence="1">Contains catalytic and regulatory chains.</text>
</comment>
<comment type="similarity">
    <text evidence="1">Belongs to the PyrI family.</text>
</comment>
<name>PYRI_CALMQ</name>
<dbReference type="EMBL" id="CP000852">
    <property type="protein sequence ID" value="ABW01409.1"/>
    <property type="molecule type" value="Genomic_DNA"/>
</dbReference>
<dbReference type="RefSeq" id="WP_012185629.1">
    <property type="nucleotide sequence ID" value="NC_009954.1"/>
</dbReference>
<dbReference type="SMR" id="A8MCA3"/>
<dbReference type="STRING" id="397948.Cmaq_0566"/>
<dbReference type="GeneID" id="5709863"/>
<dbReference type="KEGG" id="cma:Cmaq_0566"/>
<dbReference type="eggNOG" id="arCOG04229">
    <property type="taxonomic scope" value="Archaea"/>
</dbReference>
<dbReference type="HOGENOM" id="CLU_128576_0_0_2"/>
<dbReference type="OrthoDB" id="7000at2157"/>
<dbReference type="Proteomes" id="UP000001137">
    <property type="component" value="Chromosome"/>
</dbReference>
<dbReference type="GO" id="GO:0009347">
    <property type="term" value="C:aspartate carbamoyltransferase complex"/>
    <property type="evidence" value="ECO:0007669"/>
    <property type="project" value="InterPro"/>
</dbReference>
<dbReference type="GO" id="GO:0046872">
    <property type="term" value="F:metal ion binding"/>
    <property type="evidence" value="ECO:0007669"/>
    <property type="project" value="UniProtKB-KW"/>
</dbReference>
<dbReference type="GO" id="GO:0006207">
    <property type="term" value="P:'de novo' pyrimidine nucleobase biosynthetic process"/>
    <property type="evidence" value="ECO:0007669"/>
    <property type="project" value="InterPro"/>
</dbReference>
<dbReference type="GO" id="GO:0006221">
    <property type="term" value="P:pyrimidine nucleotide biosynthetic process"/>
    <property type="evidence" value="ECO:0007669"/>
    <property type="project" value="UniProtKB-UniRule"/>
</dbReference>
<dbReference type="Gene3D" id="2.30.30.20">
    <property type="entry name" value="Aspartate carbamoyltransferase regulatory subunit, C-terminal domain"/>
    <property type="match status" value="1"/>
</dbReference>
<dbReference type="Gene3D" id="3.30.70.140">
    <property type="entry name" value="Aspartate carbamoyltransferase regulatory subunit, N-terminal domain"/>
    <property type="match status" value="1"/>
</dbReference>
<dbReference type="HAMAP" id="MF_00002">
    <property type="entry name" value="Asp_carb_tr_reg"/>
    <property type="match status" value="1"/>
</dbReference>
<dbReference type="InterPro" id="IPR020545">
    <property type="entry name" value="Asp_carbamoyltransf_reg_N"/>
</dbReference>
<dbReference type="InterPro" id="IPR002801">
    <property type="entry name" value="Asp_carbamoylTrfase_reg"/>
</dbReference>
<dbReference type="InterPro" id="IPR020542">
    <property type="entry name" value="Asp_carbamoyltrfase_reg_C"/>
</dbReference>
<dbReference type="InterPro" id="IPR036792">
    <property type="entry name" value="Asp_carbatrfase_reg_C_sf"/>
</dbReference>
<dbReference type="InterPro" id="IPR036793">
    <property type="entry name" value="Asp_carbatrfase_reg_N_sf"/>
</dbReference>
<dbReference type="NCBIfam" id="TIGR00240">
    <property type="entry name" value="ATCase_reg"/>
    <property type="match status" value="1"/>
</dbReference>
<dbReference type="PANTHER" id="PTHR35805">
    <property type="entry name" value="ASPARTATE CARBAMOYLTRANSFERASE REGULATORY CHAIN"/>
    <property type="match status" value="1"/>
</dbReference>
<dbReference type="PANTHER" id="PTHR35805:SF1">
    <property type="entry name" value="ASPARTATE CARBAMOYLTRANSFERASE REGULATORY CHAIN"/>
    <property type="match status" value="1"/>
</dbReference>
<dbReference type="Pfam" id="PF01948">
    <property type="entry name" value="PyrI"/>
    <property type="match status" value="1"/>
</dbReference>
<dbReference type="Pfam" id="PF02748">
    <property type="entry name" value="PyrI_C"/>
    <property type="match status" value="1"/>
</dbReference>
<dbReference type="SUPFAM" id="SSF57825">
    <property type="entry name" value="Aspartate carbamoyltransferase, Regulatory-chain, C-terminal domain"/>
    <property type="match status" value="1"/>
</dbReference>
<dbReference type="SUPFAM" id="SSF54893">
    <property type="entry name" value="Aspartate carbamoyltransferase, Regulatory-chain, N-terminal domain"/>
    <property type="match status" value="1"/>
</dbReference>
<gene>
    <name evidence="1" type="primary">pyrI</name>
    <name type="ordered locus">Cmaq_0566</name>
</gene>
<sequence length="163" mass="18216">MMSSKVQERDLIVSKIKDGIVIDHIPAGRALIVLRVLKLKGGEGRVALVMNADSRRLGRKDIVKIEGKELSNDELNLVSLIAPTATINIIRDYSVIKKFQVKLPETVKGVVKCRNPKCITNQPREDAVPTFRVLHLDQPILQCQYCGTYLTIDDINAQLTGER</sequence>